<sequence length="644" mass="70220">MSKNAIGIDLGTTYSCVGVFMHGKVEIIANDQGNRTTPSYVAFTDTERLIGDAAKNQVAMNPHNTVFDANRLIGRKFDDGSVQSDMKHWPFKVVNAGGGKPKVQVEYKGETKTFTPEEISSMVLVKMKETAEAFLGHAVKDAVITVPAYFNDSQRQATKDSGAIAGLNVLRIINEPTAAAIAYGLDKKGHGERNVLIFDLGGGTFDVSILTIEDGIFEVKSTAGDTHLGEDFDNRMVNHFVAEFKRNDKKDLASNPRALRRLRTACERAKRTLSSSSQASIEIDSLFEGIDFYTNITRARFEELCADLFRSTMDPVEKALRDAKMDKAQVHDIVLVGGSTRIPKVQKLLSDFFSGKELNKSINPDEAVAYGAAVQAAILSGDKSEAVQDLLLLDVAPLSLGIETAGGVMTALIKRNTTIPTKTSETFTTYSDNQPGVLIQVYEGERALTKDNNLLGKFELSGIPPAPRGVPQIEVTFDIDANGILNVSAQDKSTGKQNKITITNDKGRLSKDEIERMVQEAEKYKADDEAQKDRIAAKNALESYAFNMKQTIEDEKLKDKISEEDKKKIQEKCDETVRWLDGNQTAEKDEFEHRQKELESVCNPIITKLYQSAGGMPGGMPGGMPGGAPGAGSTGGGPTIEEVD</sequence>
<gene>
    <name type="primary">HSP70</name>
</gene>
<feature type="chain" id="PRO_0000078297" description="Heat shock 70 kDa protein">
    <location>
        <begin position="1"/>
        <end position="644"/>
    </location>
</feature>
<feature type="region of interest" description="Disordered" evidence="1">
    <location>
        <begin position="613"/>
        <end position="644"/>
    </location>
</feature>
<feature type="compositionally biased region" description="Gly residues" evidence="1">
    <location>
        <begin position="615"/>
        <end position="638"/>
    </location>
</feature>
<organism>
    <name type="scientific">Brugia malayi</name>
    <name type="common">Filarial nematode worm</name>
    <dbReference type="NCBI Taxonomy" id="6279"/>
    <lineage>
        <taxon>Eukaryota</taxon>
        <taxon>Metazoa</taxon>
        <taxon>Ecdysozoa</taxon>
        <taxon>Nematoda</taxon>
        <taxon>Chromadorea</taxon>
        <taxon>Rhabditida</taxon>
        <taxon>Spirurina</taxon>
        <taxon>Spiruromorpha</taxon>
        <taxon>Filarioidea</taxon>
        <taxon>Onchocercidae</taxon>
        <taxon>Brugia</taxon>
    </lineage>
</organism>
<name>HSP70_BRUMA</name>
<keyword id="KW-0067">ATP-binding</keyword>
<keyword id="KW-0547">Nucleotide-binding</keyword>
<keyword id="KW-1185">Reference proteome</keyword>
<keyword id="KW-0346">Stress response</keyword>
<dbReference type="EMBL" id="M68933">
    <property type="protein sequence ID" value="AAC17926.1"/>
    <property type="molecule type" value="Genomic_DNA"/>
</dbReference>
<dbReference type="PIR" id="A45635">
    <property type="entry name" value="A45635"/>
</dbReference>
<dbReference type="SMR" id="P27541"/>
<dbReference type="FunCoup" id="P27541">
    <property type="interactions" value="1155"/>
</dbReference>
<dbReference type="STRING" id="6279.P27541"/>
<dbReference type="InParanoid" id="P27541"/>
<dbReference type="Proteomes" id="UP000006672">
    <property type="component" value="Unassembled WGS sequence"/>
</dbReference>
<dbReference type="GO" id="GO:0005524">
    <property type="term" value="F:ATP binding"/>
    <property type="evidence" value="ECO:0007669"/>
    <property type="project" value="UniProtKB-KW"/>
</dbReference>
<dbReference type="GO" id="GO:0140662">
    <property type="term" value="F:ATP-dependent protein folding chaperone"/>
    <property type="evidence" value="ECO:0007669"/>
    <property type="project" value="InterPro"/>
</dbReference>
<dbReference type="GO" id="GO:0009408">
    <property type="term" value="P:response to heat"/>
    <property type="evidence" value="ECO:0000270"/>
    <property type="project" value="WormBase"/>
</dbReference>
<dbReference type="CDD" id="cd10233">
    <property type="entry name" value="ASKHA_NBD_HSP70_HSPA1"/>
    <property type="match status" value="1"/>
</dbReference>
<dbReference type="FunFam" id="2.60.34.10:FF:000002">
    <property type="entry name" value="Heat shock 70 kDa"/>
    <property type="match status" value="1"/>
</dbReference>
<dbReference type="FunFam" id="3.30.420.40:FF:000172">
    <property type="entry name" value="Heat shock 70 kDa protein"/>
    <property type="match status" value="1"/>
</dbReference>
<dbReference type="FunFam" id="3.30.30.30:FF:000001">
    <property type="entry name" value="heat shock 70 kDa protein-like"/>
    <property type="match status" value="1"/>
</dbReference>
<dbReference type="FunFam" id="3.30.420.40:FF:000028">
    <property type="entry name" value="heat shock 70 kDa protein-like"/>
    <property type="match status" value="1"/>
</dbReference>
<dbReference type="FunFam" id="3.30.420.40:FF:000135">
    <property type="entry name" value="Heat shock cognate 71 kDa protein"/>
    <property type="match status" value="1"/>
</dbReference>
<dbReference type="FunFam" id="3.90.640.10:FF:000134">
    <property type="entry name" value="Heat shock cognate 71 kDa protein"/>
    <property type="match status" value="1"/>
</dbReference>
<dbReference type="FunFam" id="1.20.1270.10:FF:000003">
    <property type="entry name" value="heat shock cognate 71 kDa protein-like"/>
    <property type="match status" value="1"/>
</dbReference>
<dbReference type="FunFam" id="3.30.420.40:FF:000026">
    <property type="entry name" value="Heat shock protein 70"/>
    <property type="match status" value="1"/>
</dbReference>
<dbReference type="Gene3D" id="1.20.1270.10">
    <property type="match status" value="1"/>
</dbReference>
<dbReference type="Gene3D" id="3.30.30.30">
    <property type="match status" value="1"/>
</dbReference>
<dbReference type="Gene3D" id="3.30.420.40">
    <property type="match status" value="2"/>
</dbReference>
<dbReference type="Gene3D" id="3.90.640.10">
    <property type="entry name" value="Actin, Chain A, domain 4"/>
    <property type="match status" value="1"/>
</dbReference>
<dbReference type="Gene3D" id="2.60.34.10">
    <property type="entry name" value="Substrate Binding Domain Of DNAk, Chain A, domain 1"/>
    <property type="match status" value="1"/>
</dbReference>
<dbReference type="InterPro" id="IPR043129">
    <property type="entry name" value="ATPase_NBD"/>
</dbReference>
<dbReference type="InterPro" id="IPR018181">
    <property type="entry name" value="Heat_shock_70_CS"/>
</dbReference>
<dbReference type="InterPro" id="IPR029048">
    <property type="entry name" value="HSP70_C_sf"/>
</dbReference>
<dbReference type="InterPro" id="IPR029047">
    <property type="entry name" value="HSP70_peptide-bd_sf"/>
</dbReference>
<dbReference type="InterPro" id="IPR013126">
    <property type="entry name" value="Hsp_70_fam"/>
</dbReference>
<dbReference type="NCBIfam" id="NF001413">
    <property type="entry name" value="PRK00290.1"/>
    <property type="match status" value="1"/>
</dbReference>
<dbReference type="PANTHER" id="PTHR19375">
    <property type="entry name" value="HEAT SHOCK PROTEIN 70KDA"/>
    <property type="match status" value="1"/>
</dbReference>
<dbReference type="Pfam" id="PF00012">
    <property type="entry name" value="HSP70"/>
    <property type="match status" value="1"/>
</dbReference>
<dbReference type="PRINTS" id="PR00301">
    <property type="entry name" value="HEATSHOCK70"/>
</dbReference>
<dbReference type="SUPFAM" id="SSF53067">
    <property type="entry name" value="Actin-like ATPase domain"/>
    <property type="match status" value="2"/>
</dbReference>
<dbReference type="SUPFAM" id="SSF100934">
    <property type="entry name" value="Heat shock protein 70kD (HSP70), C-terminal subdomain"/>
    <property type="match status" value="1"/>
</dbReference>
<dbReference type="SUPFAM" id="SSF100920">
    <property type="entry name" value="Heat shock protein 70kD (HSP70), peptide-binding domain"/>
    <property type="match status" value="1"/>
</dbReference>
<dbReference type="PROSITE" id="PS00297">
    <property type="entry name" value="HSP70_1"/>
    <property type="match status" value="1"/>
</dbReference>
<dbReference type="PROSITE" id="PS00329">
    <property type="entry name" value="HSP70_2"/>
    <property type="match status" value="1"/>
</dbReference>
<dbReference type="PROSITE" id="PS01036">
    <property type="entry name" value="HSP70_3"/>
    <property type="match status" value="1"/>
</dbReference>
<proteinExistence type="inferred from homology"/>
<evidence type="ECO:0000256" key="1">
    <source>
        <dbReference type="SAM" id="MobiDB-lite"/>
    </source>
</evidence>
<evidence type="ECO:0000305" key="2"/>
<reference key="1">
    <citation type="journal article" date="1991" name="Mol. Biochem. Parasitol.">
        <title>Characterization of an hsp70 gene from the human filarial parasite, Brugia malayi (Nematoda).</title>
        <authorList>
            <person name="Rothstein N."/>
            <person name="Rajan T.V."/>
        </authorList>
    </citation>
    <scope>NUCLEOTIDE SEQUENCE [GENOMIC DNA]</scope>
</reference>
<protein>
    <recommendedName>
        <fullName>Heat shock 70 kDa protein</fullName>
    </recommendedName>
</protein>
<comment type="similarity">
    <text evidence="2">Belongs to the heat shock protein 70 family.</text>
</comment>
<accession>P27541</accession>